<name>GET3_ASPFN</name>
<keyword id="KW-0067">ATP-binding</keyword>
<keyword id="KW-0963">Cytoplasm</keyword>
<keyword id="KW-0256">Endoplasmic reticulum</keyword>
<keyword id="KW-0378">Hydrolase</keyword>
<keyword id="KW-0479">Metal-binding</keyword>
<keyword id="KW-0547">Nucleotide-binding</keyword>
<keyword id="KW-0813">Transport</keyword>
<keyword id="KW-0862">Zinc</keyword>
<comment type="function">
    <text evidence="1">ATPase required for the post-translational delivery of tail-anchored (TA) proteins to the endoplasmic reticulum. Recognizes and selectively binds the transmembrane domain of TA proteins in the cytosol. This complex then targets to the endoplasmic reticulum by membrane-bound receptors, where the tail-anchored protein is released for insertion. This process is regulated by ATP binding and hydrolysis. ATP binding drives the homodimer towards the closed dimer state, facilitating recognition of newly synthesized TA membrane proteins. ATP hydrolysis is required for insertion. Subsequently, the homodimer reverts towards the open dimer state, lowering its affinity for the membrane-bound receptor, and returning it to the cytosol to initiate a new round of targeting.</text>
</comment>
<comment type="subunit">
    <text evidence="1">Homodimer.</text>
</comment>
<comment type="subcellular location">
    <subcellularLocation>
        <location evidence="1">Cytoplasm</location>
    </subcellularLocation>
    <subcellularLocation>
        <location evidence="1">Endoplasmic reticulum</location>
    </subcellularLocation>
</comment>
<comment type="similarity">
    <text evidence="1">Belongs to the arsA ATPase family.</text>
</comment>
<comment type="sequence caution" evidence="2">
    <conflict type="erroneous gene model prediction">
        <sequence resource="EMBL-CDS" id="EED55859"/>
    </conflict>
</comment>
<proteinExistence type="inferred from homology"/>
<reference key="1">
    <citation type="journal article" date="2015" name="Genome Announc.">
        <title>Genome sequence of Aspergillus flavus NRRL 3357, a strain that causes aflatoxin contamination of food and feed.</title>
        <authorList>
            <person name="Nierman W.C."/>
            <person name="Yu J."/>
            <person name="Fedorova-Abrams N.D."/>
            <person name="Losada L."/>
            <person name="Cleveland T.E."/>
            <person name="Bhatnagar D."/>
            <person name="Bennett J.W."/>
            <person name="Dean R."/>
            <person name="Payne G.A."/>
        </authorList>
    </citation>
    <scope>NUCLEOTIDE SEQUENCE [LARGE SCALE GENOMIC DNA]</scope>
    <source>
        <strain>ATCC 200026 / FGSC A1120 / IAM 13836 / NRRL 3357 / JCM 12722 / SRRC 167</strain>
    </source>
</reference>
<evidence type="ECO:0000255" key="1">
    <source>
        <dbReference type="HAMAP-Rule" id="MF_03112"/>
    </source>
</evidence>
<evidence type="ECO:0000305" key="2"/>
<accession>B8N3P7</accession>
<sequence>MSTAVVQADDLMEPSLQSIVSQDTLRWIFVGGKGGVGKTTTSCSLAIQLAKARKSVLLISTDPAHNLSDAFGQKFGKEARLVDGYTNLSAMEIDPNGSIQDLLASGEGQGDDPMAGLGVGNMMQDLAFSIPGVDEAMSFAEVLKQVKSLSYEVIVFDTAPTGHTLRFLQFPTVLEKALAKLSQLSSQFGPMLNSILGSRGGLPGGQNIDELLQKMESLRETISEVNTQFKNPDMTTFVCVCIAEFLSLYETERMIQELTSYNIDTHAIVVNQLLFPKQGSECEQCNARRKMQKKYLEQIEELYEDFNVVRMPLLVEEVRGKEKLEKFSDMLIHPYVPPQ</sequence>
<dbReference type="EC" id="3.6.-.-" evidence="1"/>
<dbReference type="EMBL" id="EQ963473">
    <property type="protein sequence ID" value="EED55859.1"/>
    <property type="status" value="ALT_SEQ"/>
    <property type="molecule type" value="Genomic_DNA"/>
</dbReference>
<dbReference type="RefSeq" id="XP_002374641.1">
    <property type="nucleotide sequence ID" value="XM_002374600.1"/>
</dbReference>
<dbReference type="SMR" id="B8N3P7"/>
<dbReference type="STRING" id="332952.B8N3P7"/>
<dbReference type="EnsemblFungi" id="EED55859">
    <property type="protein sequence ID" value="EED55859"/>
    <property type="gene ID" value="AFLA_031310"/>
</dbReference>
<dbReference type="VEuPathDB" id="FungiDB:AFLA_001002"/>
<dbReference type="eggNOG" id="KOG2825">
    <property type="taxonomic scope" value="Eukaryota"/>
</dbReference>
<dbReference type="GO" id="GO:0043529">
    <property type="term" value="C:GET complex"/>
    <property type="evidence" value="ECO:0007669"/>
    <property type="project" value="EnsemblFungi"/>
</dbReference>
<dbReference type="GO" id="GO:0005524">
    <property type="term" value="F:ATP binding"/>
    <property type="evidence" value="ECO:0007669"/>
    <property type="project" value="UniProtKB-UniRule"/>
</dbReference>
<dbReference type="GO" id="GO:0016887">
    <property type="term" value="F:ATP hydrolysis activity"/>
    <property type="evidence" value="ECO:0007669"/>
    <property type="project" value="EnsemblFungi"/>
</dbReference>
<dbReference type="GO" id="GO:0005085">
    <property type="term" value="F:guanyl-nucleotide exchange factor activity"/>
    <property type="evidence" value="ECO:0007669"/>
    <property type="project" value="EnsemblFungi"/>
</dbReference>
<dbReference type="GO" id="GO:0042802">
    <property type="term" value="F:identical protein binding"/>
    <property type="evidence" value="ECO:0007669"/>
    <property type="project" value="EnsemblFungi"/>
</dbReference>
<dbReference type="GO" id="GO:0046872">
    <property type="term" value="F:metal ion binding"/>
    <property type="evidence" value="ECO:0007669"/>
    <property type="project" value="UniProtKB-KW"/>
</dbReference>
<dbReference type="GO" id="GO:0044183">
    <property type="term" value="F:protein folding chaperone"/>
    <property type="evidence" value="ECO:0007669"/>
    <property type="project" value="EnsemblFungi"/>
</dbReference>
<dbReference type="GO" id="GO:0051082">
    <property type="term" value="F:unfolded protein binding"/>
    <property type="evidence" value="ECO:0007669"/>
    <property type="project" value="EnsemblFungi"/>
</dbReference>
<dbReference type="GO" id="GO:0034599">
    <property type="term" value="P:cellular response to oxidative stress"/>
    <property type="evidence" value="ECO:0007669"/>
    <property type="project" value="EnsemblFungi"/>
</dbReference>
<dbReference type="GO" id="GO:0000750">
    <property type="term" value="P:pheromone-dependent signal transduction involved in conjugation with cellular fusion"/>
    <property type="evidence" value="ECO:0007669"/>
    <property type="project" value="EnsemblFungi"/>
</dbReference>
<dbReference type="GO" id="GO:0006620">
    <property type="term" value="P:post-translational protein targeting to endoplasmic reticulum membrane"/>
    <property type="evidence" value="ECO:0007669"/>
    <property type="project" value="EnsemblFungi"/>
</dbReference>
<dbReference type="GO" id="GO:0009408">
    <property type="term" value="P:response to heat"/>
    <property type="evidence" value="ECO:0007669"/>
    <property type="project" value="EnsemblFungi"/>
</dbReference>
<dbReference type="GO" id="GO:0010038">
    <property type="term" value="P:response to metal ion"/>
    <property type="evidence" value="ECO:0007669"/>
    <property type="project" value="EnsemblFungi"/>
</dbReference>
<dbReference type="GO" id="GO:0006890">
    <property type="term" value="P:retrograde vesicle-mediated transport, Golgi to endoplasmic reticulum"/>
    <property type="evidence" value="ECO:0007669"/>
    <property type="project" value="EnsemblFungi"/>
</dbReference>
<dbReference type="GO" id="GO:0071816">
    <property type="term" value="P:tail-anchored membrane protein insertion into ER membrane"/>
    <property type="evidence" value="ECO:0007669"/>
    <property type="project" value="EnsemblFungi"/>
</dbReference>
<dbReference type="CDD" id="cd02035">
    <property type="entry name" value="ArsA"/>
    <property type="match status" value="1"/>
</dbReference>
<dbReference type="FunFam" id="3.40.50.300:FF:000235">
    <property type="entry name" value="ATPase ASNA1"/>
    <property type="match status" value="1"/>
</dbReference>
<dbReference type="Gene3D" id="3.40.50.300">
    <property type="entry name" value="P-loop containing nucleotide triphosphate hydrolases"/>
    <property type="match status" value="1"/>
</dbReference>
<dbReference type="HAMAP" id="MF_03112">
    <property type="entry name" value="Asna1_Get3"/>
    <property type="match status" value="1"/>
</dbReference>
<dbReference type="InterPro" id="IPR025723">
    <property type="entry name" value="Anion-transp_ATPase-like_dom"/>
</dbReference>
<dbReference type="InterPro" id="IPR016300">
    <property type="entry name" value="ATPase_ArsA/GET3"/>
</dbReference>
<dbReference type="InterPro" id="IPR027542">
    <property type="entry name" value="ATPase_ArsA/GET3_euk"/>
</dbReference>
<dbReference type="InterPro" id="IPR027417">
    <property type="entry name" value="P-loop_NTPase"/>
</dbReference>
<dbReference type="NCBIfam" id="TIGR00345">
    <property type="entry name" value="GET3_arsA_TRC40"/>
    <property type="match status" value="1"/>
</dbReference>
<dbReference type="PANTHER" id="PTHR10803">
    <property type="entry name" value="ARSENICAL PUMP-DRIVING ATPASE ARSENITE-TRANSLOCATING ATPASE"/>
    <property type="match status" value="1"/>
</dbReference>
<dbReference type="PANTHER" id="PTHR10803:SF3">
    <property type="entry name" value="ATPASE GET3"/>
    <property type="match status" value="1"/>
</dbReference>
<dbReference type="Pfam" id="PF02374">
    <property type="entry name" value="ArsA_ATPase"/>
    <property type="match status" value="1"/>
</dbReference>
<dbReference type="SUPFAM" id="SSF52540">
    <property type="entry name" value="P-loop containing nucleoside triphosphate hydrolases"/>
    <property type="match status" value="1"/>
</dbReference>
<organism>
    <name type="scientific">Aspergillus flavus (strain ATCC 200026 / FGSC A1120 / IAM 13836 / NRRL 3357 / JCM 12722 / SRRC 167)</name>
    <dbReference type="NCBI Taxonomy" id="332952"/>
    <lineage>
        <taxon>Eukaryota</taxon>
        <taxon>Fungi</taxon>
        <taxon>Dikarya</taxon>
        <taxon>Ascomycota</taxon>
        <taxon>Pezizomycotina</taxon>
        <taxon>Eurotiomycetes</taxon>
        <taxon>Eurotiomycetidae</taxon>
        <taxon>Eurotiales</taxon>
        <taxon>Aspergillaceae</taxon>
        <taxon>Aspergillus</taxon>
        <taxon>Aspergillus subgen. Circumdati</taxon>
    </lineage>
</organism>
<feature type="chain" id="PRO_0000388188" description="ATPase get3">
    <location>
        <begin position="1"/>
        <end position="339"/>
    </location>
</feature>
<feature type="active site" evidence="1">
    <location>
        <position position="62"/>
    </location>
</feature>
<feature type="binding site" evidence="1">
    <location>
        <begin position="33"/>
        <end position="40"/>
    </location>
    <ligand>
        <name>ATP</name>
        <dbReference type="ChEBI" id="CHEBI:30616"/>
    </ligand>
</feature>
<feature type="binding site" evidence="1">
    <location>
        <position position="244"/>
    </location>
    <ligand>
        <name>ATP</name>
        <dbReference type="ChEBI" id="CHEBI:30616"/>
    </ligand>
</feature>
<feature type="binding site" evidence="1">
    <location>
        <position position="271"/>
    </location>
    <ligand>
        <name>ATP</name>
        <dbReference type="ChEBI" id="CHEBI:30616"/>
    </ligand>
</feature>
<feature type="binding site" evidence="1">
    <location>
        <position position="282"/>
    </location>
    <ligand>
        <name>Zn(2+)</name>
        <dbReference type="ChEBI" id="CHEBI:29105"/>
        <note>ligand shared between dimeric partners</note>
    </ligand>
</feature>
<feature type="binding site" evidence="1">
    <location>
        <position position="285"/>
    </location>
    <ligand>
        <name>Zn(2+)</name>
        <dbReference type="ChEBI" id="CHEBI:29105"/>
        <note>ligand shared between dimeric partners</note>
    </ligand>
</feature>
<gene>
    <name type="primary">get3</name>
    <name type="ORF">AFLA_031310</name>
</gene>
<protein>
    <recommendedName>
        <fullName evidence="1">ATPase get3</fullName>
        <ecNumber evidence="1">3.6.-.-</ecNumber>
    </recommendedName>
    <alternativeName>
        <fullName evidence="1">Arsenical pump-driving ATPase</fullName>
    </alternativeName>
    <alternativeName>
        <fullName evidence="1">Arsenite-stimulated ATPase</fullName>
    </alternativeName>
    <alternativeName>
        <fullName evidence="1">Golgi to ER traffic protein 3</fullName>
    </alternativeName>
    <alternativeName>
        <fullName evidence="1">Guided entry of tail-anchored proteins 3</fullName>
    </alternativeName>
</protein>